<keyword id="KW-0002">3D-structure</keyword>
<keyword id="KW-1015">Disulfide bond</keyword>
<keyword id="KW-0349">Heme</keyword>
<keyword id="KW-0408">Iron</keyword>
<keyword id="KW-0479">Metal-binding</keyword>
<keyword id="KW-1185">Reference proteome</keyword>
<keyword id="KW-0964">Secreted</keyword>
<keyword id="KW-0732">Signal</keyword>
<keyword id="KW-0843">Virulence</keyword>
<sequence length="147" mass="15078">MKFSTILAIPFAIAFANAAAAPAVTAAPAPAADNPYTIYPPVPKTASINGFADRIYDQIPKCAQECVKQSTSSTPCPYWDTGCLCVIPNFTGAVGNCVASKCRGADVTNFRKLAVGACAAAGVWDPYWIIPASVSSALDAAATATGN</sequence>
<feature type="signal peptide" evidence="1">
    <location>
        <begin position="1"/>
        <end position="20"/>
    </location>
</feature>
<feature type="chain" id="PRO_0000431444" description="Secreted hemophore CSA2">
    <location>
        <begin position="21"/>
        <end position="147"/>
    </location>
</feature>
<feature type="domain" description="CFEM" evidence="2 15">
    <location>
        <begin position="34"/>
        <end position="145"/>
    </location>
</feature>
<feature type="binding site" description="axial binding residue" evidence="2 12 16">
    <location>
        <position position="80"/>
    </location>
    <ligand>
        <name>heme</name>
        <dbReference type="ChEBI" id="CHEBI:30413"/>
    </ligand>
    <ligandPart>
        <name>Fe</name>
        <dbReference type="ChEBI" id="CHEBI:18248"/>
    </ligandPart>
</feature>
<feature type="disulfide bond" evidence="2 12">
    <location>
        <begin position="62"/>
        <end position="102"/>
    </location>
</feature>
<feature type="disulfide bond" evidence="2 12">
    <location>
        <begin position="66"/>
        <end position="97"/>
    </location>
</feature>
<feature type="disulfide bond" evidence="2 12">
    <location>
        <begin position="76"/>
        <end position="83"/>
    </location>
</feature>
<feature type="disulfide bond" evidence="2 12">
    <location>
        <begin position="85"/>
        <end position="118"/>
    </location>
</feature>
<feature type="mutagenesis site" description="Impairs the heme transfer within the CFEM proteins cascade." evidence="12">
    <original>D</original>
    <variation>H</variation>
    <location>
        <position position="80"/>
    </location>
</feature>
<feature type="helix" evidence="17">
    <location>
        <begin position="35"/>
        <end position="38"/>
    </location>
</feature>
<feature type="helix" evidence="17">
    <location>
        <begin position="52"/>
        <end position="55"/>
    </location>
</feature>
<feature type="turn" evidence="17">
    <location>
        <begin position="56"/>
        <end position="58"/>
    </location>
</feature>
<feature type="helix" evidence="17">
    <location>
        <begin position="61"/>
        <end position="63"/>
    </location>
</feature>
<feature type="helix" evidence="17">
    <location>
        <begin position="65"/>
        <end position="68"/>
    </location>
</feature>
<feature type="strand" evidence="17">
    <location>
        <begin position="74"/>
        <end position="76"/>
    </location>
</feature>
<feature type="helix" evidence="17">
    <location>
        <begin position="81"/>
        <end position="86"/>
    </location>
</feature>
<feature type="helix" evidence="17">
    <location>
        <begin position="88"/>
        <end position="101"/>
    </location>
</feature>
<feature type="helix" evidence="17">
    <location>
        <begin position="105"/>
        <end position="120"/>
    </location>
</feature>
<feature type="helix" evidence="17">
    <location>
        <begin position="132"/>
        <end position="143"/>
    </location>
</feature>
<organism>
    <name type="scientific">Candida albicans (strain SC5314 / ATCC MYA-2876)</name>
    <name type="common">Yeast</name>
    <dbReference type="NCBI Taxonomy" id="237561"/>
    <lineage>
        <taxon>Eukaryota</taxon>
        <taxon>Fungi</taxon>
        <taxon>Dikarya</taxon>
        <taxon>Ascomycota</taxon>
        <taxon>Saccharomycotina</taxon>
        <taxon>Pichiomycetes</taxon>
        <taxon>Debaryomycetaceae</taxon>
        <taxon>Candida/Lodderomyces clade</taxon>
        <taxon>Candida</taxon>
    </lineage>
</organism>
<name>CSA2_CANAL</name>
<proteinExistence type="evidence at protein level"/>
<dbReference type="EMBL" id="CP017626">
    <property type="protein sequence ID" value="AOW29413.1"/>
    <property type="molecule type" value="Genomic_DNA"/>
</dbReference>
<dbReference type="RefSeq" id="XP_715426.1">
    <property type="nucleotide sequence ID" value="XM_710333.1"/>
</dbReference>
<dbReference type="PDB" id="4Y7S">
    <property type="method" value="X-ray"/>
    <property type="resolution" value="2.00 A"/>
    <property type="chains" value="A/B/C=34-144"/>
</dbReference>
<dbReference type="PDBsum" id="4Y7S"/>
<dbReference type="SMR" id="Q5A0X8"/>
<dbReference type="STRING" id="237561.Q5A0X8"/>
<dbReference type="EnsemblFungi" id="C4_06920C_A-T">
    <property type="protein sequence ID" value="C4_06920C_A-T-p1"/>
    <property type="gene ID" value="C4_06920C_A"/>
</dbReference>
<dbReference type="GeneID" id="3642930"/>
<dbReference type="KEGG" id="cal:CAALFM_C406920CA"/>
<dbReference type="CGD" id="CAL0000201350">
    <property type="gene designation" value="CSA2"/>
</dbReference>
<dbReference type="VEuPathDB" id="FungiDB:C4_06920C_A"/>
<dbReference type="HOGENOM" id="CLU_147526_0_0_1"/>
<dbReference type="InParanoid" id="Q5A0X8"/>
<dbReference type="OMA" id="CWATACK"/>
<dbReference type="OrthoDB" id="2496787at2759"/>
<dbReference type="PRO" id="PR:Q5A0X8"/>
<dbReference type="Proteomes" id="UP000000559">
    <property type="component" value="Chromosome 4"/>
</dbReference>
<dbReference type="GO" id="GO:0005576">
    <property type="term" value="C:extracellular region"/>
    <property type="evidence" value="ECO:0000314"/>
    <property type="project" value="CGD"/>
</dbReference>
<dbReference type="GO" id="GO:0020037">
    <property type="term" value="F:heme binding"/>
    <property type="evidence" value="ECO:0000314"/>
    <property type="project" value="CGD"/>
</dbReference>
<dbReference type="GO" id="GO:0046872">
    <property type="term" value="F:metal ion binding"/>
    <property type="evidence" value="ECO:0007669"/>
    <property type="project" value="UniProtKB-KW"/>
</dbReference>
<dbReference type="GO" id="GO:0035351">
    <property type="term" value="P:heme transmembrane transport"/>
    <property type="evidence" value="ECO:0000314"/>
    <property type="project" value="CGD"/>
</dbReference>
<dbReference type="GO" id="GO:0006879">
    <property type="term" value="P:intracellular iron ion homeostasis"/>
    <property type="evidence" value="ECO:0000315"/>
    <property type="project" value="CGD"/>
</dbReference>
<dbReference type="GO" id="GO:0044011">
    <property type="term" value="P:single-species biofilm formation on inanimate substrate"/>
    <property type="evidence" value="ECO:0000315"/>
    <property type="project" value="CGD"/>
</dbReference>
<dbReference type="InterPro" id="IPR008427">
    <property type="entry name" value="Extracellular_membr_CFEM_dom"/>
</dbReference>
<dbReference type="Pfam" id="PF05730">
    <property type="entry name" value="CFEM"/>
    <property type="match status" value="1"/>
</dbReference>
<dbReference type="SMART" id="SM00747">
    <property type="entry name" value="CFEM"/>
    <property type="match status" value="1"/>
</dbReference>
<dbReference type="PROSITE" id="PS52012">
    <property type="entry name" value="CFEM"/>
    <property type="match status" value="1"/>
</dbReference>
<gene>
    <name type="primary">CSA2</name>
    <name type="synonym">CRW1</name>
    <name type="ordered locus">CAALFM_C406920CA</name>
    <name type="ORF">CaO19.10629</name>
    <name type="ORF">CaO19.3117</name>
</gene>
<comment type="function">
    <text evidence="10 12">Secreted heme-binding protein involved in the utilization of iron from human hemoglobin during hyphal growth (PubMed:24796871, PubMed:27617569). May also play a role in non-hemoglobin iron utilization (PubMed:24796871). Heme transfer occurs between PGA7, RBT5 and CSA2 supporting a model in which the 3 CFEM proteins cooperate in a heme-acquisition system and form a cross-cell wall heme-transfer cascade (PubMed:27617569). The ability to acquire iron from host tissues is a major virulence factor of pathogenic microorganisms (PubMed:24796871).</text>
</comment>
<comment type="subunit">
    <text evidence="12">Homodimer (PubMed:27617569). The possibility of a transient honotrimer assembly of the holo protein is not ruled out (PubMed:27617569).</text>
</comment>
<comment type="subcellular location">
    <subcellularLocation>
        <location evidence="7">Secreted</location>
    </subcellularLocation>
</comment>
<comment type="induction">
    <text evidence="3 4 5 6 7 8 9">Expression is induced during hyphal growth, by ketoconazole, and nitric oxide. Expression is also regulated by RIM101, TSA1, HAP43 and BCR1.</text>
</comment>
<comment type="domain">
    <text evidence="12">The CFEM domain is involved in heme-binding and contains 8 cysteines and is found in proteins from several pathogenic fungi, including both human and plant pathogens (PubMed:27617569). The CFEM domain adopts a novel helical-basket fold that consists of six alpha-helices, and is uniquely stabilized by four disulfide bonds formed by its 8 signature cysteines (PubMed:27617569).</text>
</comment>
<comment type="disruption phenotype">
    <text evidence="10">Leads to defects in hemoglobin utilization as sole source of iron.</text>
</comment>
<comment type="biotechnology">
    <text evidence="11">CSA2 could be used as a new diagnostic marker of Candida albicans infection.</text>
</comment>
<comment type="similarity">
    <text evidence="14">Belongs to the RBT5 family.</text>
</comment>
<reference key="1">
    <citation type="journal article" date="2004" name="Proc. Natl. Acad. Sci. U.S.A.">
        <title>The diploid genome sequence of Candida albicans.</title>
        <authorList>
            <person name="Jones T."/>
            <person name="Federspiel N.A."/>
            <person name="Chibana H."/>
            <person name="Dungan J."/>
            <person name="Kalman S."/>
            <person name="Magee B.B."/>
            <person name="Newport G."/>
            <person name="Thorstenson Y.R."/>
            <person name="Agabian N."/>
            <person name="Magee P.T."/>
            <person name="Davis R.W."/>
            <person name="Scherer S."/>
        </authorList>
    </citation>
    <scope>NUCLEOTIDE SEQUENCE [LARGE SCALE GENOMIC DNA]</scope>
    <source>
        <strain>SC5314 / ATCC MYA-2876</strain>
    </source>
</reference>
<reference key="2">
    <citation type="journal article" date="2007" name="Genome Biol.">
        <title>Assembly of the Candida albicans genome into sixteen supercontigs aligned on the eight chromosomes.</title>
        <authorList>
            <person name="van het Hoog M."/>
            <person name="Rast T.J."/>
            <person name="Martchenko M."/>
            <person name="Grindle S."/>
            <person name="Dignard D."/>
            <person name="Hogues H."/>
            <person name="Cuomo C."/>
            <person name="Berriman M."/>
            <person name="Scherer S."/>
            <person name="Magee B.B."/>
            <person name="Whiteway M."/>
            <person name="Chibana H."/>
            <person name="Nantel A."/>
            <person name="Magee P.T."/>
        </authorList>
    </citation>
    <scope>GENOME REANNOTATION</scope>
    <source>
        <strain>SC5314 / ATCC MYA-2876</strain>
    </source>
</reference>
<reference key="3">
    <citation type="journal article" date="2013" name="Genome Biol.">
        <title>Assembly of a phased diploid Candida albicans genome facilitates allele-specific measurements and provides a simple model for repeat and indel structure.</title>
        <authorList>
            <person name="Muzzey D."/>
            <person name="Schwartz K."/>
            <person name="Weissman J.S."/>
            <person name="Sherlock G."/>
        </authorList>
    </citation>
    <scope>NUCLEOTIDE SEQUENCE [LARGE SCALE GENOMIC DNA]</scope>
    <scope>GENOME REANNOTATION</scope>
    <source>
        <strain>SC5314 / ATCC MYA-2876</strain>
    </source>
</reference>
<reference key="4">
    <citation type="journal article" date="2004" name="Mol. Microbiol.">
        <title>Transcriptional profiling in Candida albicans reveals new adaptive responses to extracellular pH and functions for Rim101p.</title>
        <authorList>
            <person name="Bensen E.S."/>
            <person name="Martin S.J."/>
            <person name="Li M."/>
            <person name="Berman J."/>
            <person name="Davis D.A."/>
        </authorList>
    </citation>
    <scope>INDUCTION</scope>
</reference>
<reference key="5">
    <citation type="journal article" date="2005" name="Antimicrob. Agents Chemother.">
        <title>Genome-wide expression profiling of the response to azole, polyene, echinocandin, and pyrimidine antifungal agents in Candida albicans.</title>
        <authorList>
            <person name="Liu T.T."/>
            <person name="Lee R.E."/>
            <person name="Barker K.S."/>
            <person name="Lee R.E."/>
            <person name="Wei L."/>
            <person name="Homayouni R."/>
            <person name="Rogers P.D."/>
        </authorList>
    </citation>
    <scope>INDUCTION</scope>
</reference>
<reference key="6">
    <citation type="journal article" date="2005" name="Mol. Biol. Cell">
        <title>Transcriptional response of Candida albicans to nitric oxide and the role of the YHB1 gene in nitrosative stress and virulence.</title>
        <authorList>
            <person name="Hromatka B.S."/>
            <person name="Noble S.M."/>
            <person name="Johnson A.D."/>
        </authorList>
    </citation>
    <scope>INDUCTION</scope>
</reference>
<reference key="7">
    <citation type="journal article" date="2005" name="Mol. Microbiol.">
        <title>The moonlighting protein Tsa1p is implicated in oxidative stress response and in cell wall biogenesis in Candida albicans.</title>
        <authorList>
            <person name="Urban C."/>
            <person name="Xiong X."/>
            <person name="Sohn K."/>
            <person name="Schroppel K."/>
            <person name="Brunner H."/>
            <person name="Rupp S."/>
        </authorList>
    </citation>
    <scope>INDUCTION</scope>
</reference>
<reference key="8">
    <citation type="journal article" date="2010" name="Yeast">
        <title>Mass spectrometric analysis of the secretome of Candida albicans.</title>
        <authorList>
            <person name="Sorgo A.G."/>
            <person name="Heilmann C.J."/>
            <person name="Dekker H.L."/>
            <person name="Brul S."/>
            <person name="de Koster C.G."/>
            <person name="Klis F.M."/>
        </authorList>
    </citation>
    <scope>IDENTIFICATION BY MASS SPECTROMETRY</scope>
    <scope>SUBCELLULAR LOCATION</scope>
    <scope>INDUCTION</scope>
</reference>
<reference key="9">
    <citation type="journal article" date="2011" name="J. Biol. Chem.">
        <title>Cap2-HAP complex is a critical transcriptional regulator that has dual but contrasting roles in regulation of iron homeostasis in Candida albicans.</title>
        <authorList>
            <person name="Singh R.P."/>
            <person name="Prasad H.K."/>
            <person name="Sinha I."/>
            <person name="Agarwal N."/>
            <person name="Natarajan K."/>
        </authorList>
    </citation>
    <scope>INDUCTION</scope>
</reference>
<reference key="10">
    <citation type="journal article" date="2013" name="Eukaryot. Cell">
        <title>Identification of genes upregulated by the transcription factor Bcr1 that are involved in impermeability, impenetrability, and drug resistance of Candida albicans a/alpha biofilms.</title>
        <authorList>
            <person name="Srikantha T."/>
            <person name="Daniels K.J."/>
            <person name="Pujol C."/>
            <person name="Kim E."/>
            <person name="Soll D.R."/>
        </authorList>
    </citation>
    <scope>INDUCTION</scope>
</reference>
<reference key="11">
    <citation type="journal article" date="2014" name="FEMS Yeast Res.">
        <title>Csa2, a member of the Rbt5 protein family, is involved in the utilization of iron from human hemoglobin during Candida albicans hyphal growth.</title>
        <authorList>
            <person name="Okamoto-Shibayama K."/>
            <person name="Kikuchi Y."/>
            <person name="Kokubu E."/>
            <person name="Sato Y."/>
            <person name="Ishihara K."/>
        </authorList>
    </citation>
    <scope>DISRUPTION PHENOTYPE</scope>
    <scope>FUNCTION</scope>
    <scope>HEME-BINDING</scope>
</reference>
<reference key="12">
    <citation type="journal article" date="2014" name="Xi Bao Yu Fen Zi Mian Yi Xue Za Zhi">
        <title>Establishment and evaluation of a double antibody sandwich ELISA to detect Csa2 protein of Candida albicans.</title>
        <authorList>
            <person name="Liu L."/>
            <person name="Cai J."/>
            <person name="Liu C."/>
            <person name="Guo Y."/>
            <person name="Pan Y."/>
            <person name="Wang Y."/>
            <person name="Che X."/>
        </authorList>
    </citation>
    <scope>BIOTECHNOLOGY</scope>
</reference>
<reference evidence="16" key="13">
    <citation type="journal article" date="2016" name="Nat. Microbiol.">
        <title>Structural basis of haem-iron acquisition by fungal pathogens.</title>
        <authorList>
            <person name="Nasser L."/>
            <person name="Weissman Z."/>
            <person name="Pinsky M."/>
            <person name="Amartely H."/>
            <person name="Dvir H."/>
            <person name="Kornitzer D."/>
        </authorList>
    </citation>
    <scope>X-RAY CRYSTALLOGRAPHY (2.00 ANGSTROMS) OF 34-144 IN COMPLEX WITH HEME</scope>
    <scope>SUBUNIT</scope>
    <scope>FUNCTION</scope>
    <scope>DISRUPTION PHENOTYPE</scope>
    <scope>DOMAIN</scope>
    <scope>DISULFIDE BOND</scope>
    <scope>MUTAGENESIS OF ASP-80</scope>
</reference>
<protein>
    <recommendedName>
        <fullName evidence="13">Secreted hemophore CSA2</fullName>
    </recommendedName>
    <alternativeName>
        <fullName evidence="14">Surface antigen protein 2</fullName>
    </alternativeName>
</protein>
<accession>Q5A0X8</accession>
<accession>A0A1D8PMP6</accession>
<evidence type="ECO:0000255" key="1"/>
<evidence type="ECO:0000255" key="2">
    <source>
        <dbReference type="PROSITE-ProRule" id="PRU01356"/>
    </source>
</evidence>
<evidence type="ECO:0000269" key="3">
    <source>
    </source>
</evidence>
<evidence type="ECO:0000269" key="4">
    <source>
    </source>
</evidence>
<evidence type="ECO:0000269" key="5">
    <source>
    </source>
</evidence>
<evidence type="ECO:0000269" key="6">
    <source>
    </source>
</evidence>
<evidence type="ECO:0000269" key="7">
    <source>
    </source>
</evidence>
<evidence type="ECO:0000269" key="8">
    <source>
    </source>
</evidence>
<evidence type="ECO:0000269" key="9">
    <source>
    </source>
</evidence>
<evidence type="ECO:0000269" key="10">
    <source>
    </source>
</evidence>
<evidence type="ECO:0000269" key="11">
    <source>
    </source>
</evidence>
<evidence type="ECO:0000269" key="12">
    <source>
    </source>
</evidence>
<evidence type="ECO:0000303" key="13">
    <source>
    </source>
</evidence>
<evidence type="ECO:0000305" key="14"/>
<evidence type="ECO:0000305" key="15">
    <source>
    </source>
</evidence>
<evidence type="ECO:0007744" key="16">
    <source>
        <dbReference type="PDB" id="4Y7S"/>
    </source>
</evidence>
<evidence type="ECO:0007829" key="17">
    <source>
        <dbReference type="PDB" id="4Y7S"/>
    </source>
</evidence>